<organism>
    <name type="scientific">Burkholderia mallei (strain NCTC 10247)</name>
    <dbReference type="NCBI Taxonomy" id="320389"/>
    <lineage>
        <taxon>Bacteria</taxon>
        <taxon>Pseudomonadati</taxon>
        <taxon>Pseudomonadota</taxon>
        <taxon>Betaproteobacteria</taxon>
        <taxon>Burkholderiales</taxon>
        <taxon>Burkholderiaceae</taxon>
        <taxon>Burkholderia</taxon>
        <taxon>pseudomallei group</taxon>
    </lineage>
</organism>
<proteinExistence type="inferred from homology"/>
<accession>A3MM58</accession>
<reference key="1">
    <citation type="journal article" date="2010" name="Genome Biol. Evol.">
        <title>Continuing evolution of Burkholderia mallei through genome reduction and large-scale rearrangements.</title>
        <authorList>
            <person name="Losada L."/>
            <person name="Ronning C.M."/>
            <person name="DeShazer D."/>
            <person name="Woods D."/>
            <person name="Fedorova N."/>
            <person name="Kim H.S."/>
            <person name="Shabalina S.A."/>
            <person name="Pearson T.R."/>
            <person name="Brinkac L."/>
            <person name="Tan P."/>
            <person name="Nandi T."/>
            <person name="Crabtree J."/>
            <person name="Badger J."/>
            <person name="Beckstrom-Sternberg S."/>
            <person name="Saqib M."/>
            <person name="Schutzer S.E."/>
            <person name="Keim P."/>
            <person name="Nierman W.C."/>
        </authorList>
    </citation>
    <scope>NUCLEOTIDE SEQUENCE [LARGE SCALE GENOMIC DNA]</scope>
    <source>
        <strain>NCTC 10247</strain>
    </source>
</reference>
<feature type="chain" id="PRO_1000005047" description="Large ribosomal subunit protein bL32">
    <location>
        <begin position="1"/>
        <end position="59"/>
    </location>
</feature>
<feature type="region of interest" description="Disordered" evidence="2">
    <location>
        <begin position="1"/>
        <end position="59"/>
    </location>
</feature>
<feature type="compositionally biased region" description="Basic residues" evidence="2">
    <location>
        <begin position="49"/>
        <end position="59"/>
    </location>
</feature>
<keyword id="KW-0687">Ribonucleoprotein</keyword>
<keyword id="KW-0689">Ribosomal protein</keyword>
<evidence type="ECO:0000255" key="1">
    <source>
        <dbReference type="HAMAP-Rule" id="MF_00340"/>
    </source>
</evidence>
<evidence type="ECO:0000256" key="2">
    <source>
        <dbReference type="SAM" id="MobiDB-lite"/>
    </source>
</evidence>
<evidence type="ECO:0000305" key="3"/>
<protein>
    <recommendedName>
        <fullName evidence="1">Large ribosomal subunit protein bL32</fullName>
    </recommendedName>
    <alternativeName>
        <fullName evidence="3">50S ribosomal protein L32</fullName>
    </alternativeName>
</protein>
<name>RL32_BURM7</name>
<sequence length="59" mass="6683">MAVQQNKKSPSKRGMHRSHDFLTTSPLAVEPSTGEVHLRHHISPNGYYRGKKVVKTKND</sequence>
<comment type="similarity">
    <text evidence="1">Belongs to the bacterial ribosomal protein bL32 family.</text>
</comment>
<dbReference type="EMBL" id="CP000548">
    <property type="protein sequence ID" value="ABO06569.1"/>
    <property type="molecule type" value="Genomic_DNA"/>
</dbReference>
<dbReference type="RefSeq" id="WP_004192741.1">
    <property type="nucleotide sequence ID" value="NZ_CP007802.1"/>
</dbReference>
<dbReference type="SMR" id="A3MM58"/>
<dbReference type="GeneID" id="93061024"/>
<dbReference type="KEGG" id="bmaz:BM44_1395"/>
<dbReference type="KEGG" id="bmn:BMA10247_1805"/>
<dbReference type="PATRIC" id="fig|320389.8.peg.1556"/>
<dbReference type="GO" id="GO:0015934">
    <property type="term" value="C:large ribosomal subunit"/>
    <property type="evidence" value="ECO:0007669"/>
    <property type="project" value="InterPro"/>
</dbReference>
<dbReference type="GO" id="GO:0003735">
    <property type="term" value="F:structural constituent of ribosome"/>
    <property type="evidence" value="ECO:0007669"/>
    <property type="project" value="InterPro"/>
</dbReference>
<dbReference type="GO" id="GO:0006412">
    <property type="term" value="P:translation"/>
    <property type="evidence" value="ECO:0007669"/>
    <property type="project" value="UniProtKB-UniRule"/>
</dbReference>
<dbReference type="HAMAP" id="MF_00340">
    <property type="entry name" value="Ribosomal_bL32"/>
    <property type="match status" value="1"/>
</dbReference>
<dbReference type="InterPro" id="IPR002677">
    <property type="entry name" value="Ribosomal_bL32"/>
</dbReference>
<dbReference type="InterPro" id="IPR044957">
    <property type="entry name" value="Ribosomal_bL32_bact"/>
</dbReference>
<dbReference type="InterPro" id="IPR011332">
    <property type="entry name" value="Ribosomal_zn-bd"/>
</dbReference>
<dbReference type="NCBIfam" id="TIGR01031">
    <property type="entry name" value="rpmF_bact"/>
    <property type="match status" value="1"/>
</dbReference>
<dbReference type="PANTHER" id="PTHR35534">
    <property type="entry name" value="50S RIBOSOMAL PROTEIN L32"/>
    <property type="match status" value="1"/>
</dbReference>
<dbReference type="PANTHER" id="PTHR35534:SF1">
    <property type="entry name" value="LARGE RIBOSOMAL SUBUNIT PROTEIN BL32"/>
    <property type="match status" value="1"/>
</dbReference>
<dbReference type="Pfam" id="PF01783">
    <property type="entry name" value="Ribosomal_L32p"/>
    <property type="match status" value="1"/>
</dbReference>
<dbReference type="SUPFAM" id="SSF57829">
    <property type="entry name" value="Zn-binding ribosomal proteins"/>
    <property type="match status" value="1"/>
</dbReference>
<gene>
    <name evidence="1" type="primary">rpmF</name>
    <name type="ordered locus">BMA10247_1805</name>
</gene>